<reference key="1">
    <citation type="submission" date="2006-10" db="EMBL/GenBank/DDBJ databases">
        <title>Complete sequence of Syntrophobacter fumaroxidans MPOB.</title>
        <authorList>
            <consortium name="US DOE Joint Genome Institute"/>
            <person name="Copeland A."/>
            <person name="Lucas S."/>
            <person name="Lapidus A."/>
            <person name="Barry K."/>
            <person name="Detter J.C."/>
            <person name="Glavina del Rio T."/>
            <person name="Hammon N."/>
            <person name="Israni S."/>
            <person name="Pitluck S."/>
            <person name="Goltsman E.G."/>
            <person name="Martinez M."/>
            <person name="Schmutz J."/>
            <person name="Larimer F."/>
            <person name="Land M."/>
            <person name="Hauser L."/>
            <person name="Kyrpides N."/>
            <person name="Kim E."/>
            <person name="Boone D.R."/>
            <person name="Brockman F."/>
            <person name="Culley D."/>
            <person name="Ferry J."/>
            <person name="Gunsalus R."/>
            <person name="McInerney M.J."/>
            <person name="Morrison M."/>
            <person name="Plugge C."/>
            <person name="Rohlin L."/>
            <person name="Scholten J."/>
            <person name="Sieber J."/>
            <person name="Stams A.J.M."/>
            <person name="Worm P."/>
            <person name="Henstra A.M."/>
            <person name="Richardson P."/>
        </authorList>
    </citation>
    <scope>NUCLEOTIDE SEQUENCE [LARGE SCALE GENOMIC DNA]</scope>
    <source>
        <strain>DSM 10017 / MPOB</strain>
    </source>
</reference>
<accession>A0LN58</accession>
<proteinExistence type="inferred from homology"/>
<organism>
    <name type="scientific">Syntrophobacter fumaroxidans (strain DSM 10017 / MPOB)</name>
    <dbReference type="NCBI Taxonomy" id="335543"/>
    <lineage>
        <taxon>Bacteria</taxon>
        <taxon>Pseudomonadati</taxon>
        <taxon>Thermodesulfobacteriota</taxon>
        <taxon>Syntrophobacteria</taxon>
        <taxon>Syntrophobacterales</taxon>
        <taxon>Syntrophobacteraceae</taxon>
        <taxon>Syntrophobacter</taxon>
    </lineage>
</organism>
<sequence>MAIRRRRRTFHRRKVCRFCVDSELKIDYKDSKTLRYFVTERGKIVPRRISGNCAKHQRELTLAVKRARQIALLPHTTIHNV</sequence>
<protein>
    <recommendedName>
        <fullName evidence="1">Small ribosomal subunit protein bS18</fullName>
    </recommendedName>
    <alternativeName>
        <fullName evidence="2">30S ribosomal protein S18</fullName>
    </alternativeName>
</protein>
<keyword id="KW-1185">Reference proteome</keyword>
<keyword id="KW-0687">Ribonucleoprotein</keyword>
<keyword id="KW-0689">Ribosomal protein</keyword>
<keyword id="KW-0694">RNA-binding</keyword>
<keyword id="KW-0699">rRNA-binding</keyword>
<comment type="function">
    <text evidence="1">Binds as a heterodimer with protein bS6 to the central domain of the 16S rRNA, where it helps stabilize the platform of the 30S subunit.</text>
</comment>
<comment type="subunit">
    <text evidence="1">Part of the 30S ribosomal subunit. Forms a tight heterodimer with protein bS6.</text>
</comment>
<comment type="similarity">
    <text evidence="1">Belongs to the bacterial ribosomal protein bS18 family.</text>
</comment>
<evidence type="ECO:0000255" key="1">
    <source>
        <dbReference type="HAMAP-Rule" id="MF_00270"/>
    </source>
</evidence>
<evidence type="ECO:0000305" key="2"/>
<gene>
    <name evidence="1" type="primary">rpsR</name>
    <name type="ordered locus">Sfum_3187</name>
</gene>
<dbReference type="EMBL" id="CP000478">
    <property type="protein sequence ID" value="ABK18860.1"/>
    <property type="molecule type" value="Genomic_DNA"/>
</dbReference>
<dbReference type="RefSeq" id="WP_011699985.1">
    <property type="nucleotide sequence ID" value="NC_008554.1"/>
</dbReference>
<dbReference type="SMR" id="A0LN58"/>
<dbReference type="FunCoup" id="A0LN58">
    <property type="interactions" value="608"/>
</dbReference>
<dbReference type="STRING" id="335543.Sfum_3187"/>
<dbReference type="KEGG" id="sfu:Sfum_3187"/>
<dbReference type="eggNOG" id="COG0238">
    <property type="taxonomic scope" value="Bacteria"/>
</dbReference>
<dbReference type="HOGENOM" id="CLU_148710_2_2_7"/>
<dbReference type="InParanoid" id="A0LN58"/>
<dbReference type="OrthoDB" id="9812008at2"/>
<dbReference type="Proteomes" id="UP000001784">
    <property type="component" value="Chromosome"/>
</dbReference>
<dbReference type="GO" id="GO:0022627">
    <property type="term" value="C:cytosolic small ribosomal subunit"/>
    <property type="evidence" value="ECO:0007669"/>
    <property type="project" value="TreeGrafter"/>
</dbReference>
<dbReference type="GO" id="GO:0070181">
    <property type="term" value="F:small ribosomal subunit rRNA binding"/>
    <property type="evidence" value="ECO:0007669"/>
    <property type="project" value="TreeGrafter"/>
</dbReference>
<dbReference type="GO" id="GO:0003735">
    <property type="term" value="F:structural constituent of ribosome"/>
    <property type="evidence" value="ECO:0007669"/>
    <property type="project" value="InterPro"/>
</dbReference>
<dbReference type="GO" id="GO:0006412">
    <property type="term" value="P:translation"/>
    <property type="evidence" value="ECO:0007669"/>
    <property type="project" value="UniProtKB-UniRule"/>
</dbReference>
<dbReference type="Gene3D" id="4.10.640.10">
    <property type="entry name" value="Ribosomal protein S18"/>
    <property type="match status" value="1"/>
</dbReference>
<dbReference type="HAMAP" id="MF_00270">
    <property type="entry name" value="Ribosomal_bS18"/>
    <property type="match status" value="1"/>
</dbReference>
<dbReference type="InterPro" id="IPR001648">
    <property type="entry name" value="Ribosomal_bS18"/>
</dbReference>
<dbReference type="InterPro" id="IPR018275">
    <property type="entry name" value="Ribosomal_bS18_CS"/>
</dbReference>
<dbReference type="InterPro" id="IPR036870">
    <property type="entry name" value="Ribosomal_bS18_sf"/>
</dbReference>
<dbReference type="NCBIfam" id="TIGR00165">
    <property type="entry name" value="S18"/>
    <property type="match status" value="1"/>
</dbReference>
<dbReference type="PANTHER" id="PTHR13479">
    <property type="entry name" value="30S RIBOSOMAL PROTEIN S18"/>
    <property type="match status" value="1"/>
</dbReference>
<dbReference type="PANTHER" id="PTHR13479:SF40">
    <property type="entry name" value="SMALL RIBOSOMAL SUBUNIT PROTEIN BS18M"/>
    <property type="match status" value="1"/>
</dbReference>
<dbReference type="Pfam" id="PF01084">
    <property type="entry name" value="Ribosomal_S18"/>
    <property type="match status" value="1"/>
</dbReference>
<dbReference type="PRINTS" id="PR00974">
    <property type="entry name" value="RIBOSOMALS18"/>
</dbReference>
<dbReference type="SUPFAM" id="SSF46911">
    <property type="entry name" value="Ribosomal protein S18"/>
    <property type="match status" value="1"/>
</dbReference>
<dbReference type="PROSITE" id="PS00057">
    <property type="entry name" value="RIBOSOMAL_S18"/>
    <property type="match status" value="1"/>
</dbReference>
<feature type="chain" id="PRO_0000345554" description="Small ribosomal subunit protein bS18">
    <location>
        <begin position="1"/>
        <end position="81"/>
    </location>
</feature>
<name>RS18_SYNFM</name>